<proteinExistence type="inferred from homology"/>
<organism>
    <name type="scientific">Geobacter sp. (strain M21)</name>
    <dbReference type="NCBI Taxonomy" id="443144"/>
    <lineage>
        <taxon>Bacteria</taxon>
        <taxon>Pseudomonadati</taxon>
        <taxon>Thermodesulfobacteriota</taxon>
        <taxon>Desulfuromonadia</taxon>
        <taxon>Geobacterales</taxon>
        <taxon>Geobacteraceae</taxon>
        <taxon>Geobacter</taxon>
    </lineage>
</organism>
<sequence>MNLILLGPPGVGKGTQAKLLIDRFGIPQISTGDILRAAVKELTPMGAKAKGYMDSGALVPDEVVIGIVEERLAQEDCQKGFILDGFPRTVPQADALGQVLSGMGKSIDHVVSLSVDKEELLTRLTGRRACANCGAGYHVDFAPSKVAGVCDACSGQLVQREDDKEETILNRLSVYEAQTAPLIAYYQAAGVLRSVDGLGTVEAVQGDILAAIRA</sequence>
<accession>C6E4N6</accession>
<reference key="1">
    <citation type="submission" date="2009-07" db="EMBL/GenBank/DDBJ databases">
        <title>Complete sequence of Geobacter sp. M21.</title>
        <authorList>
            <consortium name="US DOE Joint Genome Institute"/>
            <person name="Lucas S."/>
            <person name="Copeland A."/>
            <person name="Lapidus A."/>
            <person name="Glavina del Rio T."/>
            <person name="Dalin E."/>
            <person name="Tice H."/>
            <person name="Bruce D."/>
            <person name="Goodwin L."/>
            <person name="Pitluck S."/>
            <person name="Saunders E."/>
            <person name="Brettin T."/>
            <person name="Detter J.C."/>
            <person name="Han C."/>
            <person name="Larimer F."/>
            <person name="Land M."/>
            <person name="Hauser L."/>
            <person name="Kyrpides N."/>
            <person name="Ovchinnikova G."/>
            <person name="Lovley D."/>
        </authorList>
    </citation>
    <scope>NUCLEOTIDE SEQUENCE [LARGE SCALE GENOMIC DNA]</scope>
    <source>
        <strain>M21</strain>
    </source>
</reference>
<protein>
    <recommendedName>
        <fullName evidence="1">Adenylate kinase</fullName>
        <shortName evidence="1">AK</shortName>
        <ecNumber evidence="1">2.7.4.3</ecNumber>
    </recommendedName>
    <alternativeName>
        <fullName evidence="1">ATP-AMP transphosphorylase</fullName>
    </alternativeName>
    <alternativeName>
        <fullName evidence="1">ATP:AMP phosphotransferase</fullName>
    </alternativeName>
    <alternativeName>
        <fullName evidence="1">Adenylate monophosphate kinase</fullName>
    </alternativeName>
</protein>
<evidence type="ECO:0000255" key="1">
    <source>
        <dbReference type="HAMAP-Rule" id="MF_00235"/>
    </source>
</evidence>
<name>KAD_GEOSM</name>
<comment type="function">
    <text evidence="1">Catalyzes the reversible transfer of the terminal phosphate group between ATP and AMP. Plays an important role in cellular energy homeostasis and in adenine nucleotide metabolism.</text>
</comment>
<comment type="catalytic activity">
    <reaction evidence="1">
        <text>AMP + ATP = 2 ADP</text>
        <dbReference type="Rhea" id="RHEA:12973"/>
        <dbReference type="ChEBI" id="CHEBI:30616"/>
        <dbReference type="ChEBI" id="CHEBI:456215"/>
        <dbReference type="ChEBI" id="CHEBI:456216"/>
        <dbReference type="EC" id="2.7.4.3"/>
    </reaction>
</comment>
<comment type="pathway">
    <text evidence="1">Purine metabolism; AMP biosynthesis via salvage pathway; AMP from ADP: step 1/1.</text>
</comment>
<comment type="subunit">
    <text evidence="1">Monomer.</text>
</comment>
<comment type="subcellular location">
    <subcellularLocation>
        <location evidence="1">Cytoplasm</location>
    </subcellularLocation>
</comment>
<comment type="domain">
    <text evidence="1">Consists of three domains, a large central CORE domain and two small peripheral domains, NMPbind and LID, which undergo movements during catalysis. The LID domain closes over the site of phosphoryl transfer upon ATP binding. Assembling and dissambling the active center during each catalytic cycle provides an effective means to prevent ATP hydrolysis. Some bacteria have evolved a zinc-coordinating structure that stabilizes the LID domain.</text>
</comment>
<comment type="similarity">
    <text evidence="1">Belongs to the adenylate kinase family.</text>
</comment>
<feature type="chain" id="PRO_1000204414" description="Adenylate kinase">
    <location>
        <begin position="1"/>
        <end position="214"/>
    </location>
</feature>
<feature type="region of interest" description="NMP" evidence="1">
    <location>
        <begin position="30"/>
        <end position="59"/>
    </location>
</feature>
<feature type="region of interest" description="LID" evidence="1">
    <location>
        <begin position="126"/>
        <end position="163"/>
    </location>
</feature>
<feature type="binding site" evidence="1">
    <location>
        <begin position="10"/>
        <end position="15"/>
    </location>
    <ligand>
        <name>ATP</name>
        <dbReference type="ChEBI" id="CHEBI:30616"/>
    </ligand>
</feature>
<feature type="binding site" evidence="1">
    <location>
        <position position="31"/>
    </location>
    <ligand>
        <name>AMP</name>
        <dbReference type="ChEBI" id="CHEBI:456215"/>
    </ligand>
</feature>
<feature type="binding site" evidence="1">
    <location>
        <position position="36"/>
    </location>
    <ligand>
        <name>AMP</name>
        <dbReference type="ChEBI" id="CHEBI:456215"/>
    </ligand>
</feature>
<feature type="binding site" evidence="1">
    <location>
        <begin position="57"/>
        <end position="59"/>
    </location>
    <ligand>
        <name>AMP</name>
        <dbReference type="ChEBI" id="CHEBI:456215"/>
    </ligand>
</feature>
<feature type="binding site" evidence="1">
    <location>
        <begin position="85"/>
        <end position="88"/>
    </location>
    <ligand>
        <name>AMP</name>
        <dbReference type="ChEBI" id="CHEBI:456215"/>
    </ligand>
</feature>
<feature type="binding site" evidence="1">
    <location>
        <position position="92"/>
    </location>
    <ligand>
        <name>AMP</name>
        <dbReference type="ChEBI" id="CHEBI:456215"/>
    </ligand>
</feature>
<feature type="binding site" evidence="1">
    <location>
        <position position="127"/>
    </location>
    <ligand>
        <name>ATP</name>
        <dbReference type="ChEBI" id="CHEBI:30616"/>
    </ligand>
</feature>
<feature type="binding site" evidence="1">
    <location>
        <position position="130"/>
    </location>
    <ligand>
        <name>Zn(2+)</name>
        <dbReference type="ChEBI" id="CHEBI:29105"/>
        <note>structural</note>
    </ligand>
</feature>
<feature type="binding site" evidence="1">
    <location>
        <position position="133"/>
    </location>
    <ligand>
        <name>Zn(2+)</name>
        <dbReference type="ChEBI" id="CHEBI:29105"/>
        <note>structural</note>
    </ligand>
</feature>
<feature type="binding site" evidence="1">
    <location>
        <position position="150"/>
    </location>
    <ligand>
        <name>Zn(2+)</name>
        <dbReference type="ChEBI" id="CHEBI:29105"/>
        <note>structural</note>
    </ligand>
</feature>
<feature type="binding site" evidence="1">
    <location>
        <position position="153"/>
    </location>
    <ligand>
        <name>Zn(2+)</name>
        <dbReference type="ChEBI" id="CHEBI:29105"/>
        <note>structural</note>
    </ligand>
</feature>
<feature type="binding site" evidence="1">
    <location>
        <position position="160"/>
    </location>
    <ligand>
        <name>AMP</name>
        <dbReference type="ChEBI" id="CHEBI:456215"/>
    </ligand>
</feature>
<feature type="binding site" evidence="1">
    <location>
        <position position="171"/>
    </location>
    <ligand>
        <name>AMP</name>
        <dbReference type="ChEBI" id="CHEBI:456215"/>
    </ligand>
</feature>
<feature type="binding site" evidence="1">
    <location>
        <position position="199"/>
    </location>
    <ligand>
        <name>ATP</name>
        <dbReference type="ChEBI" id="CHEBI:30616"/>
    </ligand>
</feature>
<dbReference type="EC" id="2.7.4.3" evidence="1"/>
<dbReference type="EMBL" id="CP001661">
    <property type="protein sequence ID" value="ACT19332.1"/>
    <property type="molecule type" value="Genomic_DNA"/>
</dbReference>
<dbReference type="SMR" id="C6E4N6"/>
<dbReference type="STRING" id="443144.GM21_3307"/>
<dbReference type="KEGG" id="gem:GM21_3307"/>
<dbReference type="eggNOG" id="COG0563">
    <property type="taxonomic scope" value="Bacteria"/>
</dbReference>
<dbReference type="HOGENOM" id="CLU_032354_1_2_7"/>
<dbReference type="OrthoDB" id="9805030at2"/>
<dbReference type="UniPathway" id="UPA00588">
    <property type="reaction ID" value="UER00649"/>
</dbReference>
<dbReference type="GO" id="GO:0005737">
    <property type="term" value="C:cytoplasm"/>
    <property type="evidence" value="ECO:0007669"/>
    <property type="project" value="UniProtKB-SubCell"/>
</dbReference>
<dbReference type="GO" id="GO:0004017">
    <property type="term" value="F:adenylate kinase activity"/>
    <property type="evidence" value="ECO:0007669"/>
    <property type="project" value="UniProtKB-UniRule"/>
</dbReference>
<dbReference type="GO" id="GO:0005524">
    <property type="term" value="F:ATP binding"/>
    <property type="evidence" value="ECO:0007669"/>
    <property type="project" value="UniProtKB-UniRule"/>
</dbReference>
<dbReference type="GO" id="GO:0008270">
    <property type="term" value="F:zinc ion binding"/>
    <property type="evidence" value="ECO:0007669"/>
    <property type="project" value="UniProtKB-UniRule"/>
</dbReference>
<dbReference type="GO" id="GO:0044209">
    <property type="term" value="P:AMP salvage"/>
    <property type="evidence" value="ECO:0007669"/>
    <property type="project" value="UniProtKB-UniRule"/>
</dbReference>
<dbReference type="CDD" id="cd01428">
    <property type="entry name" value="ADK"/>
    <property type="match status" value="1"/>
</dbReference>
<dbReference type="FunFam" id="3.40.50.300:FF:000106">
    <property type="entry name" value="Adenylate kinase mitochondrial"/>
    <property type="match status" value="1"/>
</dbReference>
<dbReference type="Gene3D" id="3.40.50.300">
    <property type="entry name" value="P-loop containing nucleotide triphosphate hydrolases"/>
    <property type="match status" value="1"/>
</dbReference>
<dbReference type="HAMAP" id="MF_00235">
    <property type="entry name" value="Adenylate_kinase_Adk"/>
    <property type="match status" value="1"/>
</dbReference>
<dbReference type="InterPro" id="IPR006259">
    <property type="entry name" value="Adenyl_kin_sub"/>
</dbReference>
<dbReference type="InterPro" id="IPR000850">
    <property type="entry name" value="Adenylat/UMP-CMP_kin"/>
</dbReference>
<dbReference type="InterPro" id="IPR033690">
    <property type="entry name" value="Adenylat_kinase_CS"/>
</dbReference>
<dbReference type="InterPro" id="IPR007862">
    <property type="entry name" value="Adenylate_kinase_lid-dom"/>
</dbReference>
<dbReference type="InterPro" id="IPR027417">
    <property type="entry name" value="P-loop_NTPase"/>
</dbReference>
<dbReference type="NCBIfam" id="TIGR01351">
    <property type="entry name" value="adk"/>
    <property type="match status" value="1"/>
</dbReference>
<dbReference type="NCBIfam" id="NF001380">
    <property type="entry name" value="PRK00279.1-2"/>
    <property type="match status" value="1"/>
</dbReference>
<dbReference type="NCBIfam" id="NF001381">
    <property type="entry name" value="PRK00279.1-3"/>
    <property type="match status" value="1"/>
</dbReference>
<dbReference type="NCBIfam" id="NF011100">
    <property type="entry name" value="PRK14527.1"/>
    <property type="match status" value="1"/>
</dbReference>
<dbReference type="PANTHER" id="PTHR23359">
    <property type="entry name" value="NUCLEOTIDE KINASE"/>
    <property type="match status" value="1"/>
</dbReference>
<dbReference type="Pfam" id="PF00406">
    <property type="entry name" value="ADK"/>
    <property type="match status" value="1"/>
</dbReference>
<dbReference type="Pfam" id="PF05191">
    <property type="entry name" value="ADK_lid"/>
    <property type="match status" value="1"/>
</dbReference>
<dbReference type="PRINTS" id="PR00094">
    <property type="entry name" value="ADENYLTKNASE"/>
</dbReference>
<dbReference type="SUPFAM" id="SSF52540">
    <property type="entry name" value="P-loop containing nucleoside triphosphate hydrolases"/>
    <property type="match status" value="1"/>
</dbReference>
<dbReference type="PROSITE" id="PS00113">
    <property type="entry name" value="ADENYLATE_KINASE"/>
    <property type="match status" value="1"/>
</dbReference>
<gene>
    <name evidence="1" type="primary">adk</name>
    <name type="ordered locus">GM21_3307</name>
</gene>
<keyword id="KW-0067">ATP-binding</keyword>
<keyword id="KW-0963">Cytoplasm</keyword>
<keyword id="KW-0418">Kinase</keyword>
<keyword id="KW-0479">Metal-binding</keyword>
<keyword id="KW-0545">Nucleotide biosynthesis</keyword>
<keyword id="KW-0547">Nucleotide-binding</keyword>
<keyword id="KW-0808">Transferase</keyword>
<keyword id="KW-0862">Zinc</keyword>